<reference key="1">
    <citation type="journal article" date="2001" name="J. Biol. Chem.">
        <title>Isolation and characterization of senescence-induced cDNAs encoding deoxyhypusine synthase and eucaryotic translation initiation factor 5A from tomato.</title>
        <authorList>
            <person name="Wang T.-W."/>
            <person name="Lu L."/>
            <person name="Wang D."/>
            <person name="Thompson J.E."/>
        </authorList>
    </citation>
    <scope>NUCLEOTIDE SEQUENCE [MRNA]</scope>
    <source>
        <strain>cv. Match</strain>
    </source>
</reference>
<organism>
    <name type="scientific">Solanum lycopersicum</name>
    <name type="common">Tomato</name>
    <name type="synonym">Lycopersicon esculentum</name>
    <dbReference type="NCBI Taxonomy" id="4081"/>
    <lineage>
        <taxon>Eukaryota</taxon>
        <taxon>Viridiplantae</taxon>
        <taxon>Streptophyta</taxon>
        <taxon>Embryophyta</taxon>
        <taxon>Tracheophyta</taxon>
        <taxon>Spermatophyta</taxon>
        <taxon>Magnoliopsida</taxon>
        <taxon>eudicotyledons</taxon>
        <taxon>Gunneridae</taxon>
        <taxon>Pentapetalae</taxon>
        <taxon>asterids</taxon>
        <taxon>lamiids</taxon>
        <taxon>Solanales</taxon>
        <taxon>Solanaceae</taxon>
        <taxon>Solanoideae</taxon>
        <taxon>Solaneae</taxon>
        <taxon>Solanum</taxon>
        <taxon>Solanum subgen. Lycopersicon</taxon>
    </lineage>
</organism>
<name>IF5A1_SOLLC</name>
<evidence type="ECO:0000250" key="1">
    <source>
        <dbReference type="UniProtKB" id="P23301"/>
    </source>
</evidence>
<evidence type="ECO:0000250" key="2">
    <source>
        <dbReference type="UniProtKB" id="Q9XI91"/>
    </source>
</evidence>
<evidence type="ECO:0000256" key="3">
    <source>
        <dbReference type="SAM" id="MobiDB-lite"/>
    </source>
</evidence>
<evidence type="ECO:0000305" key="4"/>
<accession>Q9AXQ6</accession>
<sequence length="159" mass="17316">MSDEEHHFESKADAGASKTYPQQAGTIRKGGHIVIKNRPCKVVEVSTSKTGKHGHAKCHFVAIDIFTGKKLEDIVPSSHNCDVPHVNRTDYQLIDISEDGFVSLLTENGNTKDDLRLPTDDTLLAQVKDGFAEGKDLVLSVMSAMGEEQICGIKDIGPK</sequence>
<feature type="chain" id="PRO_0000142467" description="Eukaryotic translation initiation factor 5A-1">
    <location>
        <begin position="1"/>
        <end position="159"/>
    </location>
</feature>
<feature type="region of interest" description="Disordered" evidence="3">
    <location>
        <begin position="1"/>
        <end position="23"/>
    </location>
</feature>
<feature type="compositionally biased region" description="Basic and acidic residues" evidence="3">
    <location>
        <begin position="1"/>
        <end position="12"/>
    </location>
</feature>
<feature type="modified residue" description="Hypusine" evidence="2">
    <location>
        <position position="52"/>
    </location>
</feature>
<proteinExistence type="evidence at transcript level"/>
<comment type="function">
    <text evidence="1">Translation factor that promotes translation elongation and termination, particularly upon ribosome stalling at specific amino acid sequence contexts (By similarity). Binds between the exit (E) and peptidyl (P) site of the ribosome and promotes rescue of stalled ribosome: specifically required for efficient translation of polyproline-containing peptides as well as other motifs that stall the ribosome (By similarity). Acts as a ribosome quality control (RQC) cofactor by joining the RQC complex to facilitate peptidyl transfer during CAT tailing step (By similarity).</text>
</comment>
<comment type="PTM">
    <text evidence="2">Lys-52 undergoes hypusination, a unique post-translational modification that consists in the addition of a butylamino group from spermidine to lysine side chain, leading to the formation of the unusual amino acid hypusine. eIF-5As are the only known proteins to undergo this modification, which is essential for their function.</text>
</comment>
<comment type="similarity">
    <text evidence="4">Belongs to the eIF-5A family.</text>
</comment>
<protein>
    <recommendedName>
        <fullName>Eukaryotic translation initiation factor 5A-1</fullName>
        <shortName>eIF-5A-1</shortName>
    </recommendedName>
</protein>
<dbReference type="EMBL" id="AF296083">
    <property type="protein sequence ID" value="AAG53647.1"/>
    <property type="molecule type" value="mRNA"/>
</dbReference>
<dbReference type="RefSeq" id="NP_001234499.1">
    <property type="nucleotide sequence ID" value="NM_001247570.2"/>
</dbReference>
<dbReference type="SMR" id="Q9AXQ6"/>
<dbReference type="FunCoup" id="Q9AXQ6">
    <property type="interactions" value="1946"/>
</dbReference>
<dbReference type="STRING" id="4081.Q9AXQ6"/>
<dbReference type="PaxDb" id="4081-Solyc03g115650.2.1"/>
<dbReference type="EnsemblPlants" id="Solyc03g115650.3.1">
    <property type="protein sequence ID" value="Solyc03g115650.3.1"/>
    <property type="gene ID" value="Solyc03g115650.3"/>
</dbReference>
<dbReference type="GeneID" id="543667"/>
<dbReference type="Gramene" id="Solyc03g115650.3.1">
    <property type="protein sequence ID" value="Solyc03g115650.3.1"/>
    <property type="gene ID" value="Solyc03g115650.3"/>
</dbReference>
<dbReference type="KEGG" id="sly:543667"/>
<dbReference type="eggNOG" id="KOG3271">
    <property type="taxonomic scope" value="Eukaryota"/>
</dbReference>
<dbReference type="InParanoid" id="Q9AXQ6"/>
<dbReference type="OMA" id="PCKIMEL"/>
<dbReference type="OrthoDB" id="9975114at2759"/>
<dbReference type="Proteomes" id="UP000004994">
    <property type="component" value="Chromosome 3"/>
</dbReference>
<dbReference type="GO" id="GO:0043022">
    <property type="term" value="F:ribosome binding"/>
    <property type="evidence" value="ECO:0007669"/>
    <property type="project" value="InterPro"/>
</dbReference>
<dbReference type="GO" id="GO:0003723">
    <property type="term" value="F:RNA binding"/>
    <property type="evidence" value="ECO:0007669"/>
    <property type="project" value="InterPro"/>
</dbReference>
<dbReference type="GO" id="GO:0003746">
    <property type="term" value="F:translation elongation factor activity"/>
    <property type="evidence" value="ECO:0000318"/>
    <property type="project" value="GO_Central"/>
</dbReference>
<dbReference type="GO" id="GO:0003743">
    <property type="term" value="F:translation initiation factor activity"/>
    <property type="evidence" value="ECO:0007669"/>
    <property type="project" value="UniProtKB-KW"/>
</dbReference>
<dbReference type="GO" id="GO:0045901">
    <property type="term" value="P:positive regulation of translational elongation"/>
    <property type="evidence" value="ECO:0007669"/>
    <property type="project" value="InterPro"/>
</dbReference>
<dbReference type="GO" id="GO:0045905">
    <property type="term" value="P:positive regulation of translational termination"/>
    <property type="evidence" value="ECO:0007669"/>
    <property type="project" value="InterPro"/>
</dbReference>
<dbReference type="GO" id="GO:0006414">
    <property type="term" value="P:translational elongation"/>
    <property type="evidence" value="ECO:0000318"/>
    <property type="project" value="GO_Central"/>
</dbReference>
<dbReference type="CDD" id="cd04468">
    <property type="entry name" value="S1_eIF5A"/>
    <property type="match status" value="1"/>
</dbReference>
<dbReference type="FunFam" id="2.30.30.30:FF:000012">
    <property type="entry name" value="Eukaryotic translation initiation factor 5A"/>
    <property type="match status" value="1"/>
</dbReference>
<dbReference type="FunFam" id="2.40.50.140:FF:000034">
    <property type="entry name" value="Eukaryotic translation initiation factor 5A"/>
    <property type="match status" value="1"/>
</dbReference>
<dbReference type="Gene3D" id="2.30.30.30">
    <property type="match status" value="1"/>
</dbReference>
<dbReference type="Gene3D" id="2.40.50.140">
    <property type="entry name" value="Nucleic acid-binding proteins"/>
    <property type="match status" value="1"/>
</dbReference>
<dbReference type="InterPro" id="IPR001884">
    <property type="entry name" value="IF5A-like"/>
</dbReference>
<dbReference type="InterPro" id="IPR048670">
    <property type="entry name" value="IF5A-like_N"/>
</dbReference>
<dbReference type="InterPro" id="IPR012340">
    <property type="entry name" value="NA-bd_OB-fold"/>
</dbReference>
<dbReference type="InterPro" id="IPR014722">
    <property type="entry name" value="Rib_uL2_dom2"/>
</dbReference>
<dbReference type="InterPro" id="IPR019769">
    <property type="entry name" value="Trans_elong_IF5A_hypusine_site"/>
</dbReference>
<dbReference type="InterPro" id="IPR020189">
    <property type="entry name" value="Transl_elong_IF5A_C"/>
</dbReference>
<dbReference type="InterPro" id="IPR008991">
    <property type="entry name" value="Translation_prot_SH3-like_sf"/>
</dbReference>
<dbReference type="NCBIfam" id="TIGR00037">
    <property type="entry name" value="eIF_5A"/>
    <property type="match status" value="1"/>
</dbReference>
<dbReference type="PANTHER" id="PTHR11673">
    <property type="entry name" value="TRANSLATION INITIATION FACTOR 5A FAMILY MEMBER"/>
    <property type="match status" value="1"/>
</dbReference>
<dbReference type="Pfam" id="PF01287">
    <property type="entry name" value="eIF-5a"/>
    <property type="match status" value="1"/>
</dbReference>
<dbReference type="Pfam" id="PF21485">
    <property type="entry name" value="IF5A-like_N"/>
    <property type="match status" value="1"/>
</dbReference>
<dbReference type="PIRSF" id="PIRSF003025">
    <property type="entry name" value="eIF5A"/>
    <property type="match status" value="1"/>
</dbReference>
<dbReference type="SMART" id="SM01376">
    <property type="entry name" value="eIF-5a"/>
    <property type="match status" value="1"/>
</dbReference>
<dbReference type="SUPFAM" id="SSF50249">
    <property type="entry name" value="Nucleic acid-binding proteins"/>
    <property type="match status" value="1"/>
</dbReference>
<dbReference type="SUPFAM" id="SSF50104">
    <property type="entry name" value="Translation proteins SH3-like domain"/>
    <property type="match status" value="1"/>
</dbReference>
<dbReference type="PROSITE" id="PS00302">
    <property type="entry name" value="IF5A_HYPUSINE"/>
    <property type="match status" value="1"/>
</dbReference>
<keyword id="KW-0385">Hypusine</keyword>
<keyword id="KW-0396">Initiation factor</keyword>
<keyword id="KW-0648">Protein biosynthesis</keyword>
<keyword id="KW-1185">Reference proteome</keyword>